<comment type="function">
    <text evidence="1">Quinone reductase that provides resistance to thiol-specific stress caused by electrophilic quinones.</text>
</comment>
<comment type="function">
    <text evidence="1">Also exhibits azoreductase activity. Catalyzes the reductive cleavage of the azo bond in aromatic azo compounds to the corresponding amines.</text>
</comment>
<comment type="catalytic activity">
    <reaction evidence="1">
        <text>2 a quinone + NADH + H(+) = 2 a 1,4-benzosemiquinone + NAD(+)</text>
        <dbReference type="Rhea" id="RHEA:65952"/>
        <dbReference type="ChEBI" id="CHEBI:15378"/>
        <dbReference type="ChEBI" id="CHEBI:57540"/>
        <dbReference type="ChEBI" id="CHEBI:57945"/>
        <dbReference type="ChEBI" id="CHEBI:132124"/>
        <dbReference type="ChEBI" id="CHEBI:134225"/>
    </reaction>
</comment>
<comment type="catalytic activity">
    <reaction evidence="1">
        <text>N,N-dimethyl-1,4-phenylenediamine + anthranilate + 2 NAD(+) = 2-(4-dimethylaminophenyl)diazenylbenzoate + 2 NADH + 2 H(+)</text>
        <dbReference type="Rhea" id="RHEA:55872"/>
        <dbReference type="ChEBI" id="CHEBI:15378"/>
        <dbReference type="ChEBI" id="CHEBI:15783"/>
        <dbReference type="ChEBI" id="CHEBI:16567"/>
        <dbReference type="ChEBI" id="CHEBI:57540"/>
        <dbReference type="ChEBI" id="CHEBI:57945"/>
        <dbReference type="ChEBI" id="CHEBI:71579"/>
        <dbReference type="EC" id="1.7.1.17"/>
    </reaction>
</comment>
<comment type="cofactor">
    <cofactor evidence="1">
        <name>FMN</name>
        <dbReference type="ChEBI" id="CHEBI:58210"/>
    </cofactor>
    <text evidence="1">Binds 1 FMN per subunit.</text>
</comment>
<comment type="subunit">
    <text evidence="1">Homodimer.</text>
</comment>
<comment type="similarity">
    <text evidence="1">Belongs to the azoreductase type 1 family.</text>
</comment>
<proteinExistence type="inferred from homology"/>
<keyword id="KW-0285">Flavoprotein</keyword>
<keyword id="KW-0288">FMN</keyword>
<keyword id="KW-0520">NAD</keyword>
<keyword id="KW-0560">Oxidoreductase</keyword>
<keyword id="KW-1185">Reference proteome</keyword>
<name>AZOR_DESPS</name>
<accession>Q6ALS1</accession>
<dbReference type="EC" id="1.6.5.-" evidence="1"/>
<dbReference type="EC" id="1.7.1.17" evidence="1"/>
<dbReference type="EMBL" id="CR522870">
    <property type="protein sequence ID" value="CAG36704.1"/>
    <property type="molecule type" value="Genomic_DNA"/>
</dbReference>
<dbReference type="RefSeq" id="WP_011189216.1">
    <property type="nucleotide sequence ID" value="NC_006138.1"/>
</dbReference>
<dbReference type="SMR" id="Q6ALS1"/>
<dbReference type="STRING" id="177439.DP1975"/>
<dbReference type="KEGG" id="dps:DP1975"/>
<dbReference type="eggNOG" id="COG1182">
    <property type="taxonomic scope" value="Bacteria"/>
</dbReference>
<dbReference type="HOGENOM" id="CLU_088964_1_0_7"/>
<dbReference type="OrthoDB" id="9787136at2"/>
<dbReference type="Proteomes" id="UP000000602">
    <property type="component" value="Chromosome"/>
</dbReference>
<dbReference type="GO" id="GO:0009055">
    <property type="term" value="F:electron transfer activity"/>
    <property type="evidence" value="ECO:0007669"/>
    <property type="project" value="UniProtKB-UniRule"/>
</dbReference>
<dbReference type="GO" id="GO:0010181">
    <property type="term" value="F:FMN binding"/>
    <property type="evidence" value="ECO:0007669"/>
    <property type="project" value="UniProtKB-UniRule"/>
</dbReference>
<dbReference type="GO" id="GO:0016652">
    <property type="term" value="F:oxidoreductase activity, acting on NAD(P)H as acceptor"/>
    <property type="evidence" value="ECO:0007669"/>
    <property type="project" value="UniProtKB-UniRule"/>
</dbReference>
<dbReference type="GO" id="GO:0016655">
    <property type="term" value="F:oxidoreductase activity, acting on NAD(P)H, quinone or similar compound as acceptor"/>
    <property type="evidence" value="ECO:0007669"/>
    <property type="project" value="InterPro"/>
</dbReference>
<dbReference type="Gene3D" id="3.40.50.360">
    <property type="match status" value="1"/>
</dbReference>
<dbReference type="HAMAP" id="MF_01216">
    <property type="entry name" value="Azoreductase_type1"/>
    <property type="match status" value="1"/>
</dbReference>
<dbReference type="InterPro" id="IPR003680">
    <property type="entry name" value="Flavodoxin_fold"/>
</dbReference>
<dbReference type="InterPro" id="IPR029039">
    <property type="entry name" value="Flavoprotein-like_sf"/>
</dbReference>
<dbReference type="InterPro" id="IPR050104">
    <property type="entry name" value="FMN-dep_NADH:Q_OxRdtase_AzoR1"/>
</dbReference>
<dbReference type="InterPro" id="IPR023048">
    <property type="entry name" value="NADH:quinone_OxRdtase_FMN_depd"/>
</dbReference>
<dbReference type="PANTHER" id="PTHR43741">
    <property type="entry name" value="FMN-DEPENDENT NADH-AZOREDUCTASE 1"/>
    <property type="match status" value="1"/>
</dbReference>
<dbReference type="PANTHER" id="PTHR43741:SF4">
    <property type="entry name" value="FMN-DEPENDENT NADH:QUINONE OXIDOREDUCTASE"/>
    <property type="match status" value="1"/>
</dbReference>
<dbReference type="Pfam" id="PF02525">
    <property type="entry name" value="Flavodoxin_2"/>
    <property type="match status" value="1"/>
</dbReference>
<dbReference type="SUPFAM" id="SSF52218">
    <property type="entry name" value="Flavoproteins"/>
    <property type="match status" value="1"/>
</dbReference>
<protein>
    <recommendedName>
        <fullName evidence="1">FMN-dependent NADH:quinone oxidoreductase</fullName>
        <ecNumber evidence="1">1.6.5.-</ecNumber>
    </recommendedName>
    <alternativeName>
        <fullName evidence="1">Azo-dye reductase</fullName>
    </alternativeName>
    <alternativeName>
        <fullName evidence="1">FMN-dependent NADH-azo compound oxidoreductase</fullName>
    </alternativeName>
    <alternativeName>
        <fullName evidence="1">FMN-dependent NADH-azoreductase</fullName>
        <ecNumber evidence="1">1.7.1.17</ecNumber>
    </alternativeName>
</protein>
<evidence type="ECO:0000255" key="1">
    <source>
        <dbReference type="HAMAP-Rule" id="MF_01216"/>
    </source>
</evidence>
<feature type="chain" id="PRO_0000245915" description="FMN-dependent NADH:quinone oxidoreductase">
    <location>
        <begin position="1"/>
        <end position="212"/>
    </location>
</feature>
<feature type="binding site" evidence="1">
    <location>
        <position position="10"/>
    </location>
    <ligand>
        <name>FMN</name>
        <dbReference type="ChEBI" id="CHEBI:58210"/>
    </ligand>
</feature>
<feature type="binding site" evidence="1">
    <location>
        <begin position="16"/>
        <end position="18"/>
    </location>
    <ligand>
        <name>FMN</name>
        <dbReference type="ChEBI" id="CHEBI:58210"/>
    </ligand>
</feature>
<feature type="binding site" evidence="1">
    <location>
        <begin position="98"/>
        <end position="101"/>
    </location>
    <ligand>
        <name>FMN</name>
        <dbReference type="ChEBI" id="CHEBI:58210"/>
    </ligand>
</feature>
<reference key="1">
    <citation type="journal article" date="2004" name="Environ. Microbiol.">
        <title>The genome of Desulfotalea psychrophila, a sulfate-reducing bacterium from permanently cold Arctic sediments.</title>
        <authorList>
            <person name="Rabus R."/>
            <person name="Ruepp A."/>
            <person name="Frickey T."/>
            <person name="Rattei T."/>
            <person name="Fartmann B."/>
            <person name="Stark M."/>
            <person name="Bauer M."/>
            <person name="Zibat A."/>
            <person name="Lombardot T."/>
            <person name="Becker I."/>
            <person name="Amann J."/>
            <person name="Gellner K."/>
            <person name="Teeling H."/>
            <person name="Leuschner W.D."/>
            <person name="Gloeckner F.-O."/>
            <person name="Lupas A.N."/>
            <person name="Amann R."/>
            <person name="Klenk H.-P."/>
        </authorList>
    </citation>
    <scope>NUCLEOTIDE SEQUENCE [LARGE SCALE GENOMIC DNA]</scope>
    <source>
        <strain>DSM 12343 / LSv54</strain>
    </source>
</reference>
<organism>
    <name type="scientific">Desulfotalea psychrophila (strain LSv54 / DSM 12343)</name>
    <dbReference type="NCBI Taxonomy" id="177439"/>
    <lineage>
        <taxon>Bacteria</taxon>
        <taxon>Pseudomonadati</taxon>
        <taxon>Thermodesulfobacteriota</taxon>
        <taxon>Desulfobulbia</taxon>
        <taxon>Desulfobulbales</taxon>
        <taxon>Desulfocapsaceae</taxon>
        <taxon>Desulfotalea</taxon>
    </lineage>
</organism>
<gene>
    <name evidence="1" type="primary">azoR</name>
    <name type="ordered locus">DP1975</name>
</gene>
<sequence length="212" mass="24075">MSKLLYIEASPRKNKSFSTRVAQSFINTFLDADPANRIETLDLWDFPLPEVDGSYLSAKYKILHWQDPTEAEARAWTEIANIVSQFKDADSYLFSIPMWNFSIPYKLKHFIDIITQPGLTFMFSPESGYQGLVTGKACTVIYARGAQYRGTKGSTLDFQKTYMELLLSFIGFENIHSIRVEPTLTDSASRERVLATAKLEAISLAKELYSLI</sequence>